<dbReference type="EMBL" id="AY864608">
    <property type="protein sequence ID" value="AAX77004.1"/>
    <property type="molecule type" value="mRNA"/>
</dbReference>
<dbReference type="RefSeq" id="NP_001041538.1">
    <property type="nucleotide sequence ID" value="NM_001048073.1"/>
</dbReference>
<dbReference type="SMR" id="Q56P28"/>
<dbReference type="FunCoup" id="Q56P28">
    <property type="interactions" value="1042"/>
</dbReference>
<dbReference type="STRING" id="9823.ENSSSCP00000052022"/>
<dbReference type="PaxDb" id="9823-ENSSSCP00000012264"/>
<dbReference type="PeptideAtlas" id="Q56P28"/>
<dbReference type="Ensembl" id="ENSSSCT00000037977.3">
    <property type="protein sequence ID" value="ENSSSCP00000036690.1"/>
    <property type="gene ID" value="ENSSSCG00000033154.3"/>
</dbReference>
<dbReference type="Ensembl" id="ENSSSCT00015032943.1">
    <property type="protein sequence ID" value="ENSSSCP00015013086.1"/>
    <property type="gene ID" value="ENSSSCG00015024811.1"/>
</dbReference>
<dbReference type="Ensembl" id="ENSSSCT00025009137.1">
    <property type="protein sequence ID" value="ENSSSCP00025003608.1"/>
    <property type="gene ID" value="ENSSSCG00025006884.1"/>
</dbReference>
<dbReference type="Ensembl" id="ENSSSCT00030053141.1">
    <property type="protein sequence ID" value="ENSSSCP00030024249.1"/>
    <property type="gene ID" value="ENSSSCG00030038167.1"/>
</dbReference>
<dbReference type="Ensembl" id="ENSSSCT00040004184.1">
    <property type="protein sequence ID" value="ENSSSCP00040001318.1"/>
    <property type="gene ID" value="ENSSSCG00040003334.1"/>
</dbReference>
<dbReference type="Ensembl" id="ENSSSCT00045027357.1">
    <property type="protein sequence ID" value="ENSSSCP00045018904.1"/>
    <property type="gene ID" value="ENSSSCG00045016085.1"/>
</dbReference>
<dbReference type="Ensembl" id="ENSSSCT00050028417.1">
    <property type="protein sequence ID" value="ENSSSCP00050011762.1"/>
    <property type="gene ID" value="ENSSSCG00050021082.1"/>
</dbReference>
<dbReference type="Ensembl" id="ENSSSCT00055018542.1">
    <property type="protein sequence ID" value="ENSSSCP00055014596.1"/>
    <property type="gene ID" value="ENSSSCG00055009514.1"/>
</dbReference>
<dbReference type="Ensembl" id="ENSSSCT00060033026.1">
    <property type="protein sequence ID" value="ENSSSCP00060014164.1"/>
    <property type="gene ID" value="ENSSSCG00060024350.1"/>
</dbReference>
<dbReference type="Ensembl" id="ENSSSCT00065106006.1">
    <property type="protein sequence ID" value="ENSSSCP00065047105.1"/>
    <property type="gene ID" value="ENSSSCG00065076702.1"/>
</dbReference>
<dbReference type="Ensembl" id="ENSSSCT00070045812.1">
    <property type="protein sequence ID" value="ENSSSCP00070038615.1"/>
    <property type="gene ID" value="ENSSSCG00070023018.1"/>
</dbReference>
<dbReference type="Ensembl" id="ENSSSCT00085054110">
    <property type="protein sequence ID" value="ENSSSCP00085037611"/>
    <property type="gene ID" value="ENSSSCG00085028362"/>
</dbReference>
<dbReference type="Ensembl" id="ENSSSCT00090050398">
    <property type="protein sequence ID" value="ENSSSCP00090031397"/>
    <property type="gene ID" value="ENSSSCG00090028478"/>
</dbReference>
<dbReference type="Ensembl" id="ENSSSCT00105046277">
    <property type="protein sequence ID" value="ENSSSCP00105032244"/>
    <property type="gene ID" value="ENSSSCG00105024468"/>
</dbReference>
<dbReference type="Ensembl" id="ENSSSCT00110017973">
    <property type="protein sequence ID" value="ENSSSCP00110012311"/>
    <property type="gene ID" value="ENSSSCG00110009259"/>
</dbReference>
<dbReference type="Ensembl" id="ENSSSCT00115020244">
    <property type="protein sequence ID" value="ENSSSCP00115019173"/>
    <property type="gene ID" value="ENSSSCG00115011707"/>
</dbReference>
<dbReference type="Ensembl" id="ENSSSCT00130024331">
    <property type="protein sequence ID" value="ENSSSCP00130016770"/>
    <property type="gene ID" value="ENSSSCG00130012438"/>
</dbReference>
<dbReference type="GeneID" id="595127"/>
<dbReference type="KEGG" id="ssc:595127"/>
<dbReference type="CTD" id="10550"/>
<dbReference type="VGNC" id="VGNC:103904">
    <property type="gene designation" value="ARL6IP5"/>
</dbReference>
<dbReference type="eggNOG" id="KOG4050">
    <property type="taxonomic scope" value="Eukaryota"/>
</dbReference>
<dbReference type="GeneTree" id="ENSGT00390000008631"/>
<dbReference type="HOGENOM" id="CLU_097683_0_0_1"/>
<dbReference type="InParanoid" id="Q56P28"/>
<dbReference type="OMA" id="WASHNKD"/>
<dbReference type="OrthoDB" id="18213at2759"/>
<dbReference type="TreeFam" id="TF105479"/>
<dbReference type="Reactome" id="R-SSC-210500">
    <property type="pathway name" value="Glutamate Neurotransmitter Release Cycle"/>
</dbReference>
<dbReference type="Proteomes" id="UP000008227">
    <property type="component" value="Chromosome 13"/>
</dbReference>
<dbReference type="Proteomes" id="UP000314985">
    <property type="component" value="Chromosome 13"/>
</dbReference>
<dbReference type="Proteomes" id="UP000694570">
    <property type="component" value="Unplaced"/>
</dbReference>
<dbReference type="Proteomes" id="UP000694571">
    <property type="component" value="Unplaced"/>
</dbReference>
<dbReference type="Proteomes" id="UP000694720">
    <property type="component" value="Unplaced"/>
</dbReference>
<dbReference type="Proteomes" id="UP000694722">
    <property type="component" value="Unplaced"/>
</dbReference>
<dbReference type="Proteomes" id="UP000694723">
    <property type="component" value="Unplaced"/>
</dbReference>
<dbReference type="Proteomes" id="UP000694724">
    <property type="component" value="Unplaced"/>
</dbReference>
<dbReference type="Proteomes" id="UP000694725">
    <property type="component" value="Unplaced"/>
</dbReference>
<dbReference type="Proteomes" id="UP000694726">
    <property type="component" value="Unplaced"/>
</dbReference>
<dbReference type="Proteomes" id="UP000694727">
    <property type="component" value="Unplaced"/>
</dbReference>
<dbReference type="Proteomes" id="UP000694728">
    <property type="component" value="Unplaced"/>
</dbReference>
<dbReference type="Bgee" id="ENSSSCG00000033154">
    <property type="expression patterns" value="Expressed in hypothalamus and 46 other cell types or tissues"/>
</dbReference>
<dbReference type="ExpressionAtlas" id="Q56P28">
    <property type="expression patterns" value="baseline and differential"/>
</dbReference>
<dbReference type="GO" id="GO:0005856">
    <property type="term" value="C:cytoskeleton"/>
    <property type="evidence" value="ECO:0007669"/>
    <property type="project" value="UniProtKB-SubCell"/>
</dbReference>
<dbReference type="GO" id="GO:0005789">
    <property type="term" value="C:endoplasmic reticulum membrane"/>
    <property type="evidence" value="ECO:0007669"/>
    <property type="project" value="UniProtKB-SubCell"/>
</dbReference>
<dbReference type="GO" id="GO:0016020">
    <property type="term" value="C:membrane"/>
    <property type="evidence" value="ECO:0000318"/>
    <property type="project" value="GO_Central"/>
</dbReference>
<dbReference type="GO" id="GO:0005886">
    <property type="term" value="C:plasma membrane"/>
    <property type="evidence" value="ECO:0007669"/>
    <property type="project" value="UniProtKB-SubCell"/>
</dbReference>
<dbReference type="GO" id="GO:0015813">
    <property type="term" value="P:L-glutamate transmembrane transport"/>
    <property type="evidence" value="ECO:0000250"/>
    <property type="project" value="AgBase"/>
</dbReference>
<dbReference type="GO" id="GO:0002037">
    <property type="term" value="P:negative regulation of L-glutamate import across plasma membrane"/>
    <property type="evidence" value="ECO:0000250"/>
    <property type="project" value="UniProtKB"/>
</dbReference>
<dbReference type="GO" id="GO:0051051">
    <property type="term" value="P:negative regulation of transport"/>
    <property type="evidence" value="ECO:0000318"/>
    <property type="project" value="GO_Central"/>
</dbReference>
<dbReference type="InterPro" id="IPR004895">
    <property type="entry name" value="Prenylated_rab_accept_PRA1"/>
</dbReference>
<dbReference type="PANTHER" id="PTHR12859:SF2">
    <property type="entry name" value="PRA1 FAMILY PROTEIN 3"/>
    <property type="match status" value="1"/>
</dbReference>
<dbReference type="PANTHER" id="PTHR12859">
    <property type="entry name" value="PRA1 PROTEIN"/>
    <property type="match status" value="1"/>
</dbReference>
<dbReference type="Pfam" id="PF03208">
    <property type="entry name" value="PRA1"/>
    <property type="match status" value="1"/>
</dbReference>
<protein>
    <recommendedName>
        <fullName>PRA1 family protein 3</fullName>
    </recommendedName>
    <alternativeName>
        <fullName>ADP-ribosylation factor-like protein 6-interacting protein 5</fullName>
        <shortName>ARL-6-interacting protein 5</shortName>
        <shortName>Aip-5</shortName>
    </alternativeName>
</protein>
<organism>
    <name type="scientific">Sus scrofa</name>
    <name type="common">Pig</name>
    <dbReference type="NCBI Taxonomy" id="9823"/>
    <lineage>
        <taxon>Eukaryota</taxon>
        <taxon>Metazoa</taxon>
        <taxon>Chordata</taxon>
        <taxon>Craniata</taxon>
        <taxon>Vertebrata</taxon>
        <taxon>Euteleostomi</taxon>
        <taxon>Mammalia</taxon>
        <taxon>Eutheria</taxon>
        <taxon>Laurasiatheria</taxon>
        <taxon>Artiodactyla</taxon>
        <taxon>Suina</taxon>
        <taxon>Suidae</taxon>
        <taxon>Sus</taxon>
    </lineage>
</organism>
<keyword id="KW-0007">Acetylation</keyword>
<keyword id="KW-1003">Cell membrane</keyword>
<keyword id="KW-0963">Cytoplasm</keyword>
<keyword id="KW-0206">Cytoskeleton</keyword>
<keyword id="KW-0256">Endoplasmic reticulum</keyword>
<keyword id="KW-0472">Membrane</keyword>
<keyword id="KW-1185">Reference proteome</keyword>
<keyword id="KW-0812">Transmembrane</keyword>
<keyword id="KW-1133">Transmembrane helix</keyword>
<sequence>MDVNIAPLRAWDDFFPGSDRFARPDFRDISKWNNRVVSNLLYYQTNYLVVAAMMISVVGFLSPFNMILGGIVVVLVFTGFVWAAHNKDILRRLKKQYPTVFVMVVMLASYFLISMFGGVMVFVFGITFPLLLMFIHASLRLRNLKNKLENKIEGIGLKRTPMGIVLDALEQQEENISKFADYISKVNE</sequence>
<feature type="chain" id="PRO_0000256849" description="PRA1 family protein 3">
    <location>
        <begin position="1"/>
        <end position="188"/>
    </location>
</feature>
<feature type="topological domain" description="Cytoplasmic" evidence="1">
    <location>
        <begin position="1"/>
        <end position="35"/>
    </location>
</feature>
<feature type="transmembrane region" description="Helical" evidence="5">
    <location>
        <begin position="36"/>
        <end position="56"/>
    </location>
</feature>
<feature type="transmembrane region" description="Helical" evidence="5">
    <location>
        <begin position="57"/>
        <end position="77"/>
    </location>
</feature>
<feature type="topological domain" description="Cytoplasmic" evidence="1">
    <location>
        <begin position="78"/>
        <end position="93"/>
    </location>
</feature>
<feature type="transmembrane region" description="Helical" evidence="5">
    <location>
        <begin position="94"/>
        <end position="114"/>
    </location>
</feature>
<feature type="transmembrane region" description="Helical" evidence="5">
    <location>
        <begin position="115"/>
        <end position="135"/>
    </location>
</feature>
<feature type="topological domain" description="Cytoplasmic" evidence="1">
    <location>
        <begin position="136"/>
        <end position="188"/>
    </location>
</feature>
<feature type="region of interest" description="Required for homodimer formation and heterodimer formation with ARL6IP1" evidence="3">
    <location>
        <begin position="103"/>
        <end position="117"/>
    </location>
</feature>
<feature type="region of interest" description="Targeting to endoplasmic reticulum membrane" evidence="4">
    <location>
        <begin position="136"/>
        <end position="188"/>
    </location>
</feature>
<feature type="modified residue" description="N-acetylmethionine" evidence="2">
    <location>
        <position position="1"/>
    </location>
</feature>
<accession>Q56P28</accession>
<gene>
    <name type="primary">ARL6IP5</name>
    <name type="synonym">PRAF3</name>
</gene>
<reference key="1">
    <citation type="submission" date="2004-12" db="EMBL/GenBank/DDBJ databases">
        <title>Isolation and prediction of one novel swine gene that is differentially expressed in the longissimus dorsi muscle tissues from large white meishan cross combination.</title>
        <authorList>
            <person name="Liu G.Y."/>
            <person name="Xiong Z.Y."/>
        </authorList>
    </citation>
    <scope>NUCLEOTIDE SEQUENCE [MRNA]</scope>
    <source>
        <strain>Meishan</strain>
        <tissue>Muscle</tissue>
    </source>
</reference>
<proteinExistence type="evidence at transcript level"/>
<evidence type="ECO:0000250" key="1"/>
<evidence type="ECO:0000250" key="2">
    <source>
        <dbReference type="UniProtKB" id="O75915"/>
    </source>
</evidence>
<evidence type="ECO:0000250" key="3">
    <source>
        <dbReference type="UniProtKB" id="Q8R5J9"/>
    </source>
</evidence>
<evidence type="ECO:0000250" key="4">
    <source>
        <dbReference type="UniProtKB" id="Q9ES40"/>
    </source>
</evidence>
<evidence type="ECO:0000255" key="5"/>
<evidence type="ECO:0000305" key="6"/>
<name>PRAF3_PIG</name>
<comment type="function">
    <text evidence="3 4">Regulates intracellular concentrations of taurine and glutamate. Negatively modulates SLC1A1/EAAC1 glutamate transport activity by decreasing its affinity for glutamate in a PKC activity-dependent manner. Plays a role in the retention of SLC1A1/EAAC1 in the endoplasmic reticulum.</text>
</comment>
<comment type="subunit">
    <text evidence="3 4">Homodimer. Heterodimer with ARL6IP1. Forms multimers. Interacts with ARL6. Interacts with prenylated RAB1A and RAB3A. Interacts with SLC1A1/EAAC1. Interacts with RTN2 (via first transmembrane domain). Does not interact with VAMP1, VAMP2 or VAMP3.</text>
</comment>
<comment type="subcellular location">
    <subcellularLocation>
        <location evidence="4">Endoplasmic reticulum membrane</location>
        <topology evidence="5">Multi-pass membrane protein</topology>
    </subcellularLocation>
    <subcellularLocation>
        <location evidence="4">Cell membrane</location>
        <topology evidence="5">Multi-pass membrane protein</topology>
    </subcellularLocation>
    <subcellularLocation>
        <location evidence="4">Cytoplasm</location>
    </subcellularLocation>
    <subcellularLocation>
        <location evidence="4">Cytoplasm</location>
        <location evidence="4">Cytoskeleton</location>
    </subcellularLocation>
    <text evidence="4">Also exists as a soluble form in the cytoplasm. Associated with microtubules.</text>
</comment>
<comment type="similarity">
    <text evidence="6">Belongs to the PRA1 family.</text>
</comment>